<keyword id="KW-0058">Aromatic hydrocarbons catabolism</keyword>
<keyword id="KW-0210">Decarboxylase</keyword>
<keyword id="KW-0216">Detoxification</keyword>
<keyword id="KW-0903">Direct protein sequencing</keyword>
<keyword id="KW-0285">Flavoprotein</keyword>
<keyword id="KW-0288">FMN</keyword>
<keyword id="KW-0456">Lyase</keyword>
<keyword id="KW-0464">Manganese</keyword>
<keyword id="KW-0479">Metal-binding</keyword>
<dbReference type="EC" id="4.1.1.-" evidence="3 7"/>
<dbReference type="EMBL" id="AF134589">
    <property type="protein sequence ID" value="AAD28782.1"/>
    <property type="molecule type" value="Genomic_DNA"/>
</dbReference>
<dbReference type="SMR" id="Q9X697"/>
<dbReference type="GO" id="GO:0005829">
    <property type="term" value="C:cytosol"/>
    <property type="evidence" value="ECO:0007669"/>
    <property type="project" value="TreeGrafter"/>
</dbReference>
<dbReference type="GO" id="GO:0008694">
    <property type="term" value="F:3-octaprenyl-4-hydroxybenzoate carboxy-lyase activity"/>
    <property type="evidence" value="ECO:0007669"/>
    <property type="project" value="TreeGrafter"/>
</dbReference>
<dbReference type="GO" id="GO:0046872">
    <property type="term" value="F:metal ion binding"/>
    <property type="evidence" value="ECO:0007669"/>
    <property type="project" value="UniProtKB-KW"/>
</dbReference>
<dbReference type="GO" id="GO:0009056">
    <property type="term" value="P:catabolic process"/>
    <property type="evidence" value="ECO:0007669"/>
    <property type="project" value="UniProtKB-KW"/>
</dbReference>
<dbReference type="GO" id="GO:0009636">
    <property type="term" value="P:response to toxic substance"/>
    <property type="evidence" value="ECO:0007669"/>
    <property type="project" value="UniProtKB-KW"/>
</dbReference>
<dbReference type="GO" id="GO:0006744">
    <property type="term" value="P:ubiquinone biosynthetic process"/>
    <property type="evidence" value="ECO:0007669"/>
    <property type="project" value="TreeGrafter"/>
</dbReference>
<dbReference type="FunFam" id="3.40.1670.10:FF:000003">
    <property type="entry name" value="Phenolic acid decarboxylase"/>
    <property type="match status" value="1"/>
</dbReference>
<dbReference type="Gene3D" id="3.40.1670.10">
    <property type="entry name" value="UbiD C-terminal domain-like"/>
    <property type="match status" value="1"/>
</dbReference>
<dbReference type="HAMAP" id="MF_01985">
    <property type="entry name" value="UbiD_YclC"/>
    <property type="match status" value="1"/>
</dbReference>
<dbReference type="InterPro" id="IPR032902">
    <property type="entry name" value="BsdC"/>
</dbReference>
<dbReference type="InterPro" id="IPR053417">
    <property type="entry name" value="PAD_UbiD-like"/>
</dbReference>
<dbReference type="InterPro" id="IPR002830">
    <property type="entry name" value="UbiD"/>
</dbReference>
<dbReference type="InterPro" id="IPR049381">
    <property type="entry name" value="UbiD-like_C"/>
</dbReference>
<dbReference type="InterPro" id="IPR049383">
    <property type="entry name" value="UbiD-like_N"/>
</dbReference>
<dbReference type="InterPro" id="IPR048304">
    <property type="entry name" value="UbiD_Rift_dom"/>
</dbReference>
<dbReference type="NCBIfam" id="TIGR00148">
    <property type="entry name" value="UbiD family decarboxylase"/>
    <property type="match status" value="1"/>
</dbReference>
<dbReference type="NCBIfam" id="NF041204">
    <property type="entry name" value="VdcC"/>
    <property type="match status" value="1"/>
</dbReference>
<dbReference type="PANTHER" id="PTHR30108">
    <property type="entry name" value="3-OCTAPRENYL-4-HYDROXYBENZOATE CARBOXY-LYASE-RELATED"/>
    <property type="match status" value="1"/>
</dbReference>
<dbReference type="PANTHER" id="PTHR30108:SF17">
    <property type="entry name" value="FERULIC ACID DECARBOXYLASE 1"/>
    <property type="match status" value="1"/>
</dbReference>
<dbReference type="Pfam" id="PF01977">
    <property type="entry name" value="UbiD"/>
    <property type="match status" value="1"/>
</dbReference>
<dbReference type="Pfam" id="PF20696">
    <property type="entry name" value="UbiD_C"/>
    <property type="match status" value="1"/>
</dbReference>
<dbReference type="Pfam" id="PF20695">
    <property type="entry name" value="UbiD_N"/>
    <property type="match status" value="1"/>
</dbReference>
<dbReference type="SUPFAM" id="SSF50475">
    <property type="entry name" value="FMN-binding split barrel"/>
    <property type="match status" value="1"/>
</dbReference>
<dbReference type="SUPFAM" id="SSF143968">
    <property type="entry name" value="UbiD C-terminal domain-like"/>
    <property type="match status" value="1"/>
</dbReference>
<organism>
    <name type="scientific">Streptomyces sp. (strain D7)</name>
    <dbReference type="NCBI Taxonomy" id="92742"/>
    <lineage>
        <taxon>Bacteria</taxon>
        <taxon>Bacillati</taxon>
        <taxon>Actinomycetota</taxon>
        <taxon>Actinomycetes</taxon>
        <taxon>Kitasatosporales</taxon>
        <taxon>Streptomycetaceae</taxon>
        <taxon>Streptomyces</taxon>
    </lineage>
</organism>
<evidence type="ECO:0000255" key="1">
    <source>
        <dbReference type="HAMAP-Rule" id="MF_01985"/>
    </source>
</evidence>
<evidence type="ECO:0000269" key="2">
    <source>
    </source>
</evidence>
<evidence type="ECO:0000269" key="3">
    <source>
    </source>
</evidence>
<evidence type="ECO:0000303" key="4">
    <source>
    </source>
</evidence>
<evidence type="ECO:0000303" key="5">
    <source>
    </source>
</evidence>
<evidence type="ECO:0000305" key="6"/>
<evidence type="ECO:0000305" key="7">
    <source>
    </source>
</evidence>
<name>YCLC_STRD7</name>
<gene>
    <name evidence="4" type="primary">vdcC</name>
</gene>
<protein>
    <recommendedName>
        <fullName evidence="1 4">Phenolic acid decarboxylase</fullName>
        <shortName evidence="1">PAD</shortName>
    </recommendedName>
    <alternativeName>
        <fullName evidence="4">Phenolic acid decarboxylase subunit C</fullName>
    </alternativeName>
    <alternativeName>
        <fullName evidence="4">Vanillate decarboxylase</fullName>
        <shortName evidence="5">Vanillate DC</shortName>
        <ecNumber evidence="3 7">4.1.1.-</ecNumber>
    </alternativeName>
</protein>
<reference key="1">
    <citation type="journal article" date="1999" name="Microbiology">
        <title>Characterization of a vanillic acid non-oxidative decarboxylation gene cluster from Streptomyces sp. D7.</title>
        <authorList>
            <person name="Chow K.T."/>
            <person name="Pope M.K."/>
            <person name="Davies J."/>
        </authorList>
    </citation>
    <scope>NUCLEOTIDE SEQUENCE [GENOMIC DNA]</scope>
    <scope>PROTEIN SEQUENCE OF 2-23</scope>
    <scope>FUNCTION</scope>
    <scope>CATALYTIC ACTIVITY</scope>
    <scope>INDUCTION</scope>
    <source>
        <strain>D7</strain>
    </source>
</reference>
<reference key="2">
    <citation type="journal article" date="2005" name="Genomics">
        <title>Distribution of genes encoding the microbial non-oxidative reversible hydroxyarylic acid decarboxylases/phenol carboxylases.</title>
        <authorList>
            <person name="Lupa B."/>
            <person name="Lyon D."/>
            <person name="Gibbs M.D."/>
            <person name="Reeves R.A."/>
            <person name="Wiegel J."/>
        </authorList>
    </citation>
    <scope>FUNCTION</scope>
    <scope>CATALYTIC ACTIVITY</scope>
    <source>
        <strain>D7</strain>
    </source>
</reference>
<feature type="initiator methionine" description="Removed" evidence="2">
    <location>
        <position position="1"/>
    </location>
</feature>
<feature type="chain" id="PRO_0000157367" description="Phenolic acid decarboxylase">
    <location>
        <begin position="2"/>
        <end position="474"/>
    </location>
</feature>
<feature type="active site" description="Proton donor" evidence="1">
    <location>
        <position position="273"/>
    </location>
</feature>
<feature type="binding site" evidence="1">
    <location>
        <begin position="161"/>
        <end position="166"/>
    </location>
    <ligand>
        <name>prenylated FMN</name>
        <dbReference type="ChEBI" id="CHEBI:87746"/>
    </ligand>
</feature>
<feature type="binding site" evidence="1">
    <location>
        <position position="161"/>
    </location>
    <ligand>
        <name>Mn(2+)</name>
        <dbReference type="ChEBI" id="CHEBI:29035"/>
    </ligand>
</feature>
<feature type="binding site" evidence="1">
    <location>
        <begin position="181"/>
        <end position="182"/>
    </location>
    <ligand>
        <name>prenylated FMN</name>
        <dbReference type="ChEBI" id="CHEBI:87746"/>
    </ligand>
</feature>
<feature type="binding site" evidence="1">
    <location>
        <position position="182"/>
    </location>
    <ligand>
        <name>Mn(2+)</name>
        <dbReference type="ChEBI" id="CHEBI:29035"/>
    </ligand>
</feature>
<feature type="binding site" evidence="1">
    <location>
        <position position="224"/>
    </location>
    <ligand>
        <name>Mn(2+)</name>
        <dbReference type="ChEBI" id="CHEBI:29035"/>
    </ligand>
</feature>
<accession>Q9X697</accession>
<comment type="function">
    <text evidence="2 3">Involved in the non-oxidative decarboxylation and detoxification of phenolic derivatives under both aerobic and anaerobic conditions (PubMed:10517592, PubMed:15979273). Phenolic acid decarboxylase that catalyzes the reversible decarboxylation of vanillate (PubMed:10517592, PubMed:15979273).</text>
</comment>
<comment type="catalytic activity">
    <reaction evidence="3 7">
        <text>vanillate + H(+) = guaiacol + CO2</text>
        <dbReference type="Rhea" id="RHEA:51528"/>
        <dbReference type="ChEBI" id="CHEBI:15378"/>
        <dbReference type="ChEBI" id="CHEBI:16526"/>
        <dbReference type="ChEBI" id="CHEBI:16632"/>
        <dbReference type="ChEBI" id="CHEBI:28591"/>
    </reaction>
</comment>
<comment type="cofactor">
    <cofactor evidence="1">
        <name>prenylated FMN</name>
        <dbReference type="ChEBI" id="CHEBI:87746"/>
    </cofactor>
    <text evidence="1">Binds 1 prenylated FMN per subunit.</text>
</comment>
<comment type="cofactor">
    <cofactor evidence="1">
        <name>Mn(2+)</name>
        <dbReference type="ChEBI" id="CHEBI:29035"/>
    </cofactor>
</comment>
<comment type="induction">
    <text evidence="2">By vanillate.</text>
</comment>
<comment type="miscellaneous">
    <text evidence="6">It is not known, if phenolic acid decarboxylase forms a complex composed of VdcB, VdcC and VdcD. The term subunit is often used in reference to the operon, however there is no experimental evidence to prove the existence of the complex.</text>
</comment>
<comment type="similarity">
    <text evidence="1">Belongs to the UbiD family. YclC subfamily.</text>
</comment>
<proteinExistence type="evidence at protein level"/>
<sequence length="474" mass="52120">MAYDDLRSFLDTLEKEGQLLRITDEVLPEPDLAAAANATGRIGENAPALHFDNVKGFTDARIAMNVHGSWANHALALGLPKNTPVKEQVEEFARRWDAFPVAPERREEAPWRENTQEGEDVDLFSVLPLFRLNDGDGGFYLDKAAVVSRDPEDRDDFGKQNVGTYRIQVIGTNRLAFHPAMHDVAQHLRKAEEKGEDLPIAITLGNDPVMAIVAGMPMAYDQSEYEMAGALRGAPAPIATAPLTGFDVPWGSEVVIEGVIESRKRRIEGPFGEFTGHYSGGRRMPVIRVERVSYRHEPVFESLYLGMPWNECDYLVGPNTCVPLLKQLRAEFPEVQAVNAMYTHGLMVIISTAKRYGGFAKAVGMRAMTTPHGLGYVAQVILVDEDVDPFNLPQVMWAMSAKVNPKDDVVVIPNLSVLELAPAAQPAGISSKMIIDATTPVAPDVRGNFSTPAKDLPETAEWAARLQRLIAARV</sequence>